<keyword id="KW-1043">Host membrane</keyword>
<keyword id="KW-0472">Membrane</keyword>
<keyword id="KW-1185">Reference proteome</keyword>
<keyword id="KW-0812">Transmembrane</keyword>
<keyword id="KW-1133">Transmembrane helix</keyword>
<sequence length="72" mass="9043">MKIKILKFLKRKKWWEILVYILVVGFGFALFIGSIYDKWDKLIKWERYFILIYVSCKFVFLIWISLMYFIYN</sequence>
<name>ORF15_SPV1C</name>
<gene>
    <name type="ORF">ORF15</name>
</gene>
<feature type="chain" id="PRO_0000372075" description="Uncharacterized protein ORF15">
    <location>
        <begin position="1"/>
        <end position="72"/>
    </location>
</feature>
<feature type="transmembrane region" description="Helical" evidence="1">
    <location>
        <begin position="15"/>
        <end position="35"/>
    </location>
</feature>
<feature type="transmembrane region" description="Helical" evidence="1">
    <location>
        <begin position="50"/>
        <end position="70"/>
    </location>
</feature>
<organismHost>
    <name type="scientific">Spiroplasma melliferum</name>
    <dbReference type="NCBI Taxonomy" id="2134"/>
</organismHost>
<organism>
    <name type="scientific">Spiroplasma virus SpV1-C74</name>
    <name type="common">SpV1</name>
    <dbReference type="NCBI Taxonomy" id="185959"/>
    <lineage>
        <taxon>Viruses</taxon>
        <taxon>Monodnaviria</taxon>
        <taxon>Loebvirae</taxon>
        <taxon>Hofneiviricota</taxon>
        <taxon>Faserviricetes</taxon>
        <taxon>Tubulavirales</taxon>
        <taxon>Plectroviridae</taxon>
        <taxon>Vespertiliovirus</taxon>
        <taxon>Vespertiliovirus C74</taxon>
    </lineage>
</organism>
<comment type="subcellular location">
    <subcellularLocation>
        <location evidence="2">Host membrane</location>
        <topology evidence="2">Multi-pass membrane protein</topology>
    </subcellularLocation>
</comment>
<proteinExistence type="predicted"/>
<accession>Q88417</accession>
<dbReference type="EMBL" id="U28974">
    <property type="protein sequence ID" value="AAA85010.1"/>
    <property type="molecule type" value="Genomic_DNA"/>
</dbReference>
<dbReference type="RefSeq" id="NP_620624.1">
    <property type="nucleotide sequence ID" value="NC_003793.1"/>
</dbReference>
<dbReference type="SMR" id="Q88417"/>
<dbReference type="KEGG" id="vg:944353"/>
<dbReference type="Proteomes" id="UP000001764">
    <property type="component" value="Genome"/>
</dbReference>
<dbReference type="GO" id="GO:0033644">
    <property type="term" value="C:host cell membrane"/>
    <property type="evidence" value="ECO:0007669"/>
    <property type="project" value="UniProtKB-SubCell"/>
</dbReference>
<dbReference type="GO" id="GO:0016020">
    <property type="term" value="C:membrane"/>
    <property type="evidence" value="ECO:0007669"/>
    <property type="project" value="UniProtKB-KW"/>
</dbReference>
<reference key="1">
    <citation type="journal article" date="1996" name="Curr. Microbiol.">
        <title>Spiroplasma citri Virus SpV1: Characterization of viral sequences present in the spiroplasmal host chromosome.</title>
        <authorList>
            <person name="Bebear C.M."/>
            <person name="Aullo P."/>
            <person name="Bove J."/>
            <person name="Renaudin J."/>
        </authorList>
    </citation>
    <scope>NUCLEOTIDE SEQUENCE [GENOMIC DNA]</scope>
</reference>
<protein>
    <recommendedName>
        <fullName>Uncharacterized protein ORF15</fullName>
    </recommendedName>
</protein>
<evidence type="ECO:0000255" key="1"/>
<evidence type="ECO:0000305" key="2"/>